<organism>
    <name type="scientific">Cyanothece sp. (strain PCC 7425 / ATCC 29141)</name>
    <dbReference type="NCBI Taxonomy" id="395961"/>
    <lineage>
        <taxon>Bacteria</taxon>
        <taxon>Bacillati</taxon>
        <taxon>Cyanobacteriota</taxon>
        <taxon>Cyanophyceae</taxon>
        <taxon>Gomontiellales</taxon>
        <taxon>Cyanothecaceae</taxon>
        <taxon>Cyanothece</taxon>
    </lineage>
</organism>
<evidence type="ECO:0000255" key="1">
    <source>
        <dbReference type="HAMAP-Rule" id="MF_01612"/>
    </source>
</evidence>
<evidence type="ECO:0000255" key="2">
    <source>
        <dbReference type="PROSITE-ProRule" id="PRU01266"/>
    </source>
</evidence>
<accession>B8HP19</accession>
<dbReference type="EC" id="2.5.1.147" evidence="1"/>
<dbReference type="EMBL" id="CP001344">
    <property type="protein sequence ID" value="ACL45606.1"/>
    <property type="molecule type" value="Genomic_DNA"/>
</dbReference>
<dbReference type="SMR" id="B8HP19"/>
<dbReference type="STRING" id="395961.Cyan7425_3281"/>
<dbReference type="KEGG" id="cyn:Cyan7425_3281"/>
<dbReference type="eggNOG" id="COG1060">
    <property type="taxonomic scope" value="Bacteria"/>
</dbReference>
<dbReference type="HOGENOM" id="CLU_040406_1_0_3"/>
<dbReference type="OrthoDB" id="9802027at2"/>
<dbReference type="UniPathway" id="UPA00072"/>
<dbReference type="GO" id="GO:0051539">
    <property type="term" value="F:4 iron, 4 sulfur cluster binding"/>
    <property type="evidence" value="ECO:0007669"/>
    <property type="project" value="UniProtKB-KW"/>
</dbReference>
<dbReference type="GO" id="GO:0141093">
    <property type="term" value="F:5-amino-6-(D-ribitylamino)uracil--L-tyrosine 4-hydroxyphenyl transferase activity"/>
    <property type="evidence" value="ECO:0007669"/>
    <property type="project" value="UniProtKB-EC"/>
</dbReference>
<dbReference type="GO" id="GO:0044689">
    <property type="term" value="F:7,8-didemethyl-8-hydroxy-5-deazariboflavin synthase activity"/>
    <property type="evidence" value="ECO:0007669"/>
    <property type="project" value="TreeGrafter"/>
</dbReference>
<dbReference type="GO" id="GO:0005506">
    <property type="term" value="F:iron ion binding"/>
    <property type="evidence" value="ECO:0007669"/>
    <property type="project" value="UniProtKB-UniRule"/>
</dbReference>
<dbReference type="Gene3D" id="3.20.20.70">
    <property type="entry name" value="Aldolase class I"/>
    <property type="match status" value="1"/>
</dbReference>
<dbReference type="HAMAP" id="MF_01612">
    <property type="entry name" value="FO_synth_sub2"/>
    <property type="match status" value="1"/>
</dbReference>
<dbReference type="InterPro" id="IPR013785">
    <property type="entry name" value="Aldolase_TIM"/>
</dbReference>
<dbReference type="InterPro" id="IPR045567">
    <property type="entry name" value="CofH/MnqC-like_C"/>
</dbReference>
<dbReference type="InterPro" id="IPR019940">
    <property type="entry name" value="CofH_family"/>
</dbReference>
<dbReference type="InterPro" id="IPR034405">
    <property type="entry name" value="F420"/>
</dbReference>
<dbReference type="InterPro" id="IPR020050">
    <property type="entry name" value="FO_synthase_su2"/>
</dbReference>
<dbReference type="InterPro" id="IPR007197">
    <property type="entry name" value="rSAM"/>
</dbReference>
<dbReference type="NCBIfam" id="TIGR00423">
    <property type="entry name" value="CofH family radical SAM protein"/>
    <property type="match status" value="1"/>
</dbReference>
<dbReference type="NCBIfam" id="TIGR03551">
    <property type="entry name" value="F420_cofH"/>
    <property type="match status" value="1"/>
</dbReference>
<dbReference type="NCBIfam" id="NF005609">
    <property type="entry name" value="PRK07360.1"/>
    <property type="match status" value="1"/>
</dbReference>
<dbReference type="PANTHER" id="PTHR43076">
    <property type="entry name" value="FO SYNTHASE (COFH)"/>
    <property type="match status" value="1"/>
</dbReference>
<dbReference type="PANTHER" id="PTHR43076:SF1">
    <property type="entry name" value="LIPOYL SYNTHASE 2"/>
    <property type="match status" value="1"/>
</dbReference>
<dbReference type="Pfam" id="PF19288">
    <property type="entry name" value="CofH_C"/>
    <property type="match status" value="1"/>
</dbReference>
<dbReference type="Pfam" id="PF04055">
    <property type="entry name" value="Radical_SAM"/>
    <property type="match status" value="1"/>
</dbReference>
<dbReference type="PIRSF" id="PIRSF004762">
    <property type="entry name" value="CHP00423"/>
    <property type="match status" value="1"/>
</dbReference>
<dbReference type="SFLD" id="SFLDF00293">
    <property type="entry name" value="((2_3_4_5-tetrahydroxypentyl)a"/>
    <property type="match status" value="1"/>
</dbReference>
<dbReference type="SFLD" id="SFLDG01389">
    <property type="entry name" value="menaquinone_synthsis_involved"/>
    <property type="match status" value="1"/>
</dbReference>
<dbReference type="SFLD" id="SFLDS00029">
    <property type="entry name" value="Radical_SAM"/>
    <property type="match status" value="1"/>
</dbReference>
<dbReference type="SUPFAM" id="SSF102114">
    <property type="entry name" value="Radical SAM enzymes"/>
    <property type="match status" value="1"/>
</dbReference>
<dbReference type="PROSITE" id="PS51918">
    <property type="entry name" value="RADICAL_SAM"/>
    <property type="match status" value="1"/>
</dbReference>
<reference key="1">
    <citation type="journal article" date="2011" name="MBio">
        <title>Novel metabolic attributes of the genus Cyanothece, comprising a group of unicellular nitrogen-fixing Cyanobacteria.</title>
        <authorList>
            <person name="Bandyopadhyay A."/>
            <person name="Elvitigala T."/>
            <person name="Welsh E."/>
            <person name="Stockel J."/>
            <person name="Liberton M."/>
            <person name="Min H."/>
            <person name="Sherman L.A."/>
            <person name="Pakrasi H.B."/>
        </authorList>
    </citation>
    <scope>NUCLEOTIDE SEQUENCE [LARGE SCALE GENOMIC DNA]</scope>
    <source>
        <strain>PCC 7425 / ATCC 29141</strain>
    </source>
</reference>
<gene>
    <name evidence="1" type="primary">cofH</name>
    <name type="ordered locus">Cyan7425_3281</name>
</gene>
<name>COFH_CYAP4</name>
<protein>
    <recommendedName>
        <fullName evidence="1">5-amino-6-(D-ribitylamino)uracil--L-tyrosine 4-hydroxyphenyl transferase</fullName>
        <ecNumber evidence="1">2.5.1.147</ecNumber>
    </recommendedName>
    <alternativeName>
        <fullName evidence="1">FO synthase subunit 2</fullName>
    </alternativeName>
</protein>
<feature type="chain" id="PRO_1000215706" description="5-amino-6-(D-ribitylamino)uracil--L-tyrosine 4-hydroxyphenyl transferase">
    <location>
        <begin position="1"/>
        <end position="381"/>
    </location>
</feature>
<feature type="domain" description="Radical SAM core" evidence="2">
    <location>
        <begin position="59"/>
        <end position="306"/>
    </location>
</feature>
<feature type="binding site" evidence="1">
    <location>
        <position position="73"/>
    </location>
    <ligand>
        <name>[4Fe-4S] cluster</name>
        <dbReference type="ChEBI" id="CHEBI:49883"/>
        <note>4Fe-4S-S-AdoMet</note>
    </ligand>
</feature>
<feature type="binding site" evidence="1">
    <location>
        <position position="77"/>
    </location>
    <ligand>
        <name>[4Fe-4S] cluster</name>
        <dbReference type="ChEBI" id="CHEBI:49883"/>
        <note>4Fe-4S-S-AdoMet</note>
    </ligand>
</feature>
<feature type="binding site" evidence="1">
    <location>
        <position position="80"/>
    </location>
    <ligand>
        <name>[4Fe-4S] cluster</name>
        <dbReference type="ChEBI" id="CHEBI:49883"/>
        <note>4Fe-4S-S-AdoMet</note>
    </ligand>
</feature>
<comment type="function">
    <text evidence="1">Catalyzes the radical-mediated synthesis of 5-amino-5-(4-hydroxybenzyl)-6-(D-ribitylimino)-5,6-dihydrouracil from 5-amino-6-(D-ribitylamino)uracil and L-tyrosine.</text>
</comment>
<comment type="catalytic activity">
    <reaction evidence="1">
        <text>5-amino-6-(D-ribitylamino)uracil + L-tyrosine + S-adenosyl-L-methionine = 5-amino-5-(4-hydroxybenzyl)-6-(D-ribitylimino)-5,6-dihydrouracil + 2-iminoacetate + 5'-deoxyadenosine + L-methionine + H(+)</text>
        <dbReference type="Rhea" id="RHEA:55200"/>
        <dbReference type="ChEBI" id="CHEBI:15378"/>
        <dbReference type="ChEBI" id="CHEBI:15934"/>
        <dbReference type="ChEBI" id="CHEBI:17319"/>
        <dbReference type="ChEBI" id="CHEBI:57844"/>
        <dbReference type="ChEBI" id="CHEBI:58315"/>
        <dbReference type="ChEBI" id="CHEBI:59789"/>
        <dbReference type="ChEBI" id="CHEBI:77846"/>
        <dbReference type="ChEBI" id="CHEBI:85936"/>
        <dbReference type="EC" id="2.5.1.147"/>
    </reaction>
</comment>
<comment type="cofactor">
    <cofactor evidence="1">
        <name>[4Fe-4S] cluster</name>
        <dbReference type="ChEBI" id="CHEBI:49883"/>
    </cofactor>
    <text evidence="1">Binds 1 [4Fe-4S] cluster. The cluster is coordinated with 3 cysteines and an exchangeable S-adenosyl-L-methionine.</text>
</comment>
<comment type="pathway">
    <text evidence="1">Cofactor biosynthesis; coenzyme F0 biosynthesis.</text>
</comment>
<comment type="subunit">
    <text evidence="1">Consists of two subunits, CofG and CofH.</text>
</comment>
<comment type="similarity">
    <text evidence="1">Belongs to the radical SAM superfamily. CofH family.</text>
</comment>
<proteinExistence type="inferred from homology"/>
<keyword id="KW-0004">4Fe-4S</keyword>
<keyword id="KW-0408">Iron</keyword>
<keyword id="KW-0411">Iron-sulfur</keyword>
<keyword id="KW-0479">Metal-binding</keyword>
<keyword id="KW-0949">S-adenosyl-L-methionine</keyword>
<keyword id="KW-0808">Transferase</keyword>
<sequence length="381" mass="42352">MAVPTLSETLTTLLHRVLQGEDLTPEEGVFLLQQWDPEALTVIRQTSDRLRQQQVGDTVTYVVNRNINFTNICEQHCSFCAFRRDEDQPGAYWLGFDEILAKTGEAVERGATEICMQGGLHPGAKLQGHSLAYYLKLVETIKTTFPTLHLHAFSPQEVQFIAREDGLSYAQVITALRDAGVNSMPGTAAEVLVDEVRRVICPEKINTATWLEIISTAHALGVPTTSTMLSGQIETPQQQIEHLFLLRSLQQKAIQQDYPARFTEFILLPYVGQSAPKPLRKRVGRDQPVLQDALLLTAVARIFLGNWIVNHQPSWVKLGLAGATEALIWGCNDLGGTLMEEHITSMAGAQGGTCRSVENLQQAIASLNRPYRERTTLYGYL</sequence>